<keyword id="KW-0249">Electron transport</keyword>
<keyword id="KW-0349">Heme</keyword>
<keyword id="KW-0408">Iron</keyword>
<keyword id="KW-0472">Membrane</keyword>
<keyword id="KW-0479">Metal-binding</keyword>
<keyword id="KW-0496">Mitochondrion</keyword>
<keyword id="KW-0999">Mitochondrion inner membrane</keyword>
<keyword id="KW-0679">Respiratory chain</keyword>
<keyword id="KW-0812">Transmembrane</keyword>
<keyword id="KW-1133">Transmembrane helix</keyword>
<keyword id="KW-0813">Transport</keyword>
<keyword id="KW-0830">Ubiquinone</keyword>
<name>CYB_CTEPO</name>
<geneLocation type="mitochondrion"/>
<sequence>MTNTPQSHPLIKIVNHSFIDLPAPSNISAWSNFGSLLGVCLGLQLLTGLFLAMHYTADTTTAFSSVTHICRDVNYGWLIRYMHANGASMFFIFLYFHIGRGIYYGSYTFMDTWNIGVLLLFAVMATAFMGYVLPWGQMSFWGATVITNLLSAIPYIGPTLVEWIWGGFSVDKATLTRFFAFHFILPFIITAMVMIHLLFLHETGSNNPSGMNSDSDKIPFHPYYTIKDILGILFMMITLMSLVMFTPDLLGDPDNYTPANPLNTPPHIKPEWYFLFAYAILRSIPNKLGGVLALVFSILILMLFPILHSSKQRSMSFRPLSQCLMWMLVANLLILTWIGGQPVEHPFITIGQLASVTYFFIILILMPSTALMENKLLKW</sequence>
<proteinExistence type="inferred from homology"/>
<feature type="chain" id="PRO_0000255026" description="Cytochrome b">
    <location>
        <begin position="1"/>
        <end position="379"/>
    </location>
</feature>
<feature type="transmembrane region" description="Helical" evidence="2">
    <location>
        <begin position="33"/>
        <end position="53"/>
    </location>
</feature>
<feature type="transmembrane region" description="Helical" evidence="2">
    <location>
        <begin position="77"/>
        <end position="98"/>
    </location>
</feature>
<feature type="transmembrane region" description="Helical" evidence="2">
    <location>
        <begin position="113"/>
        <end position="133"/>
    </location>
</feature>
<feature type="transmembrane region" description="Helical" evidence="2">
    <location>
        <begin position="178"/>
        <end position="198"/>
    </location>
</feature>
<feature type="transmembrane region" description="Helical" evidence="2">
    <location>
        <begin position="226"/>
        <end position="246"/>
    </location>
</feature>
<feature type="transmembrane region" description="Helical" evidence="2">
    <location>
        <begin position="288"/>
        <end position="308"/>
    </location>
</feature>
<feature type="transmembrane region" description="Helical" evidence="2">
    <location>
        <begin position="320"/>
        <end position="340"/>
    </location>
</feature>
<feature type="transmembrane region" description="Helical" evidence="2">
    <location>
        <begin position="347"/>
        <end position="367"/>
    </location>
</feature>
<feature type="binding site" description="axial binding residue" evidence="2">
    <location>
        <position position="83"/>
    </location>
    <ligand>
        <name>heme b</name>
        <dbReference type="ChEBI" id="CHEBI:60344"/>
        <label>b562</label>
    </ligand>
    <ligandPart>
        <name>Fe</name>
        <dbReference type="ChEBI" id="CHEBI:18248"/>
    </ligandPart>
</feature>
<feature type="binding site" description="axial binding residue" evidence="2">
    <location>
        <position position="97"/>
    </location>
    <ligand>
        <name>heme b</name>
        <dbReference type="ChEBI" id="CHEBI:60344"/>
        <label>b566</label>
    </ligand>
    <ligandPart>
        <name>Fe</name>
        <dbReference type="ChEBI" id="CHEBI:18248"/>
    </ligandPart>
</feature>
<feature type="binding site" description="axial binding residue" evidence="2">
    <location>
        <position position="182"/>
    </location>
    <ligand>
        <name>heme b</name>
        <dbReference type="ChEBI" id="CHEBI:60344"/>
        <label>b562</label>
    </ligand>
    <ligandPart>
        <name>Fe</name>
        <dbReference type="ChEBI" id="CHEBI:18248"/>
    </ligandPart>
</feature>
<feature type="binding site" description="axial binding residue" evidence="2">
    <location>
        <position position="196"/>
    </location>
    <ligand>
        <name>heme b</name>
        <dbReference type="ChEBI" id="CHEBI:60344"/>
        <label>b566</label>
    </ligand>
    <ligandPart>
        <name>Fe</name>
        <dbReference type="ChEBI" id="CHEBI:18248"/>
    </ligandPart>
</feature>
<feature type="binding site" evidence="2">
    <location>
        <position position="201"/>
    </location>
    <ligand>
        <name>a ubiquinone</name>
        <dbReference type="ChEBI" id="CHEBI:16389"/>
    </ligand>
</feature>
<feature type="sequence variant" description="In strain: Isolate I539.">
    <original>PQ</original>
    <variation>RK</variation>
    <location>
        <begin position="5"/>
        <end position="6"/>
    </location>
</feature>
<feature type="sequence variant" description="In strain: Isolate I539.">
    <original>S</original>
    <variation>W</variation>
    <location>
        <position position="31"/>
    </location>
</feature>
<feature type="sequence variant" description="In strain: Isolate I539.">
    <original>L</original>
    <variation>I</variation>
    <location>
        <position position="45"/>
    </location>
</feature>
<feature type="sequence variant" description="In strain: Isolate I539.">
    <original>V</original>
    <variation>I</variation>
    <location>
        <position position="117"/>
    </location>
</feature>
<feature type="sequence variant" description="In strain: Isolate I539.">
    <original>I</original>
    <variation>M</variation>
    <location>
        <position position="218"/>
    </location>
</feature>
<feature type="sequence variant" description="In strain: Isolate I539.">
    <original>L</original>
    <variation>M</variation>
    <location>
        <position position="307"/>
    </location>
</feature>
<feature type="sequence variant" description="In strain: Isolate I539.">
    <original>N</original>
    <variation>Y</variation>
    <location>
        <position position="374"/>
    </location>
</feature>
<accession>Q94WY6</accession>
<accession>Q94WY5</accession>
<organism>
    <name type="scientific">Ctenomys porteousi</name>
    <name type="common">Porteous' tuco-tuco</name>
    <dbReference type="NCBI Taxonomy" id="33552"/>
    <lineage>
        <taxon>Eukaryota</taxon>
        <taxon>Metazoa</taxon>
        <taxon>Chordata</taxon>
        <taxon>Craniata</taxon>
        <taxon>Vertebrata</taxon>
        <taxon>Euteleostomi</taxon>
        <taxon>Mammalia</taxon>
        <taxon>Eutheria</taxon>
        <taxon>Euarchontoglires</taxon>
        <taxon>Glires</taxon>
        <taxon>Rodentia</taxon>
        <taxon>Hystricomorpha</taxon>
        <taxon>Ctenomyidae</taxon>
        <taxon>Ctenomys</taxon>
    </lineage>
</organism>
<reference key="1">
    <citation type="journal article" date="2001" name="Mol. Biol. Evol.">
        <title>Recurrent amplifications and deletions of satellite DNA accompanied chromosomal diversification in South American tuco-tucos (genus Ctenomys, Rodentia: Octodontidae): a phylogenetic approach.</title>
        <authorList>
            <person name="Slamovits C.H."/>
            <person name="Cook J.A."/>
            <person name="Lessa E.P."/>
            <person name="Rossi M.S."/>
        </authorList>
    </citation>
    <scope>NUCLEOTIDE SEQUENCE [GENOMIC DNA]</scope>
    <source>
        <strain>Isolate I229</strain>
        <strain>Isolate I539</strain>
    </source>
</reference>
<evidence type="ECO:0000250" key="1"/>
<evidence type="ECO:0000250" key="2">
    <source>
        <dbReference type="UniProtKB" id="P00157"/>
    </source>
</evidence>
<evidence type="ECO:0000255" key="3">
    <source>
        <dbReference type="PROSITE-ProRule" id="PRU00967"/>
    </source>
</evidence>
<evidence type="ECO:0000255" key="4">
    <source>
        <dbReference type="PROSITE-ProRule" id="PRU00968"/>
    </source>
</evidence>
<comment type="function">
    <text evidence="2">Component of the ubiquinol-cytochrome c reductase complex (complex III or cytochrome b-c1 complex) that is part of the mitochondrial respiratory chain. The b-c1 complex mediates electron transfer from ubiquinol to cytochrome c. Contributes to the generation of a proton gradient across the mitochondrial membrane that is then used for ATP synthesis.</text>
</comment>
<comment type="cofactor">
    <cofactor evidence="2">
        <name>heme b</name>
        <dbReference type="ChEBI" id="CHEBI:60344"/>
    </cofactor>
    <text evidence="2">Binds 2 heme b groups non-covalently.</text>
</comment>
<comment type="subunit">
    <text evidence="2">The cytochrome bc1 complex contains 11 subunits: 3 respiratory subunits (MT-CYB, CYC1 and UQCRFS1), 2 core proteins (UQCRC1 and UQCRC2) and 6 low-molecular weight proteins (UQCRH/QCR6, UQCRB/QCR7, UQCRQ/QCR8, UQCR10/QCR9, UQCR11/QCR10 and a cleavage product of UQCRFS1). This cytochrome bc1 complex then forms a dimer.</text>
</comment>
<comment type="subcellular location">
    <subcellularLocation>
        <location evidence="2">Mitochondrion inner membrane</location>
        <topology evidence="2">Multi-pass membrane protein</topology>
    </subcellularLocation>
</comment>
<comment type="miscellaneous">
    <text evidence="1">Heme 1 (or BL or b562) is low-potential and absorbs at about 562 nm, and heme 2 (or BH or b566) is high-potential and absorbs at about 566 nm.</text>
</comment>
<comment type="similarity">
    <text evidence="3 4">Belongs to the cytochrome b family.</text>
</comment>
<comment type="caution">
    <text evidence="2">The full-length protein contains only eight transmembrane helices, not nine as predicted by bioinformatics tools.</text>
</comment>
<dbReference type="EMBL" id="AF370681">
    <property type="protein sequence ID" value="AAL01845.1"/>
    <property type="molecule type" value="Genomic_DNA"/>
</dbReference>
<dbReference type="EMBL" id="AF370682">
    <property type="protein sequence ID" value="AAL01846.1"/>
    <property type="molecule type" value="Genomic_DNA"/>
</dbReference>
<dbReference type="SMR" id="Q94WY6"/>
<dbReference type="GO" id="GO:0005743">
    <property type="term" value="C:mitochondrial inner membrane"/>
    <property type="evidence" value="ECO:0007669"/>
    <property type="project" value="UniProtKB-SubCell"/>
</dbReference>
<dbReference type="GO" id="GO:0045275">
    <property type="term" value="C:respiratory chain complex III"/>
    <property type="evidence" value="ECO:0007669"/>
    <property type="project" value="InterPro"/>
</dbReference>
<dbReference type="GO" id="GO:0046872">
    <property type="term" value="F:metal ion binding"/>
    <property type="evidence" value="ECO:0007669"/>
    <property type="project" value="UniProtKB-KW"/>
</dbReference>
<dbReference type="GO" id="GO:0008121">
    <property type="term" value="F:ubiquinol-cytochrome-c reductase activity"/>
    <property type="evidence" value="ECO:0007669"/>
    <property type="project" value="InterPro"/>
</dbReference>
<dbReference type="GO" id="GO:0006122">
    <property type="term" value="P:mitochondrial electron transport, ubiquinol to cytochrome c"/>
    <property type="evidence" value="ECO:0007669"/>
    <property type="project" value="TreeGrafter"/>
</dbReference>
<dbReference type="CDD" id="cd00290">
    <property type="entry name" value="cytochrome_b_C"/>
    <property type="match status" value="1"/>
</dbReference>
<dbReference type="CDD" id="cd00284">
    <property type="entry name" value="Cytochrome_b_N"/>
    <property type="match status" value="1"/>
</dbReference>
<dbReference type="FunFam" id="1.20.810.10:FF:000002">
    <property type="entry name" value="Cytochrome b"/>
    <property type="match status" value="1"/>
</dbReference>
<dbReference type="Gene3D" id="1.20.810.10">
    <property type="entry name" value="Cytochrome Bc1 Complex, Chain C"/>
    <property type="match status" value="1"/>
</dbReference>
<dbReference type="InterPro" id="IPR005798">
    <property type="entry name" value="Cyt_b/b6_C"/>
</dbReference>
<dbReference type="InterPro" id="IPR036150">
    <property type="entry name" value="Cyt_b/b6_C_sf"/>
</dbReference>
<dbReference type="InterPro" id="IPR005797">
    <property type="entry name" value="Cyt_b/b6_N"/>
</dbReference>
<dbReference type="InterPro" id="IPR027387">
    <property type="entry name" value="Cytb/b6-like_sf"/>
</dbReference>
<dbReference type="InterPro" id="IPR030689">
    <property type="entry name" value="Cytochrome_b"/>
</dbReference>
<dbReference type="InterPro" id="IPR048260">
    <property type="entry name" value="Cytochrome_b_C_euk/bac"/>
</dbReference>
<dbReference type="InterPro" id="IPR048259">
    <property type="entry name" value="Cytochrome_b_N_euk/bac"/>
</dbReference>
<dbReference type="InterPro" id="IPR016174">
    <property type="entry name" value="Di-haem_cyt_TM"/>
</dbReference>
<dbReference type="PANTHER" id="PTHR19271">
    <property type="entry name" value="CYTOCHROME B"/>
    <property type="match status" value="1"/>
</dbReference>
<dbReference type="PANTHER" id="PTHR19271:SF16">
    <property type="entry name" value="CYTOCHROME B"/>
    <property type="match status" value="1"/>
</dbReference>
<dbReference type="Pfam" id="PF00032">
    <property type="entry name" value="Cytochrom_B_C"/>
    <property type="match status" value="1"/>
</dbReference>
<dbReference type="Pfam" id="PF00033">
    <property type="entry name" value="Cytochrome_B"/>
    <property type="match status" value="1"/>
</dbReference>
<dbReference type="PIRSF" id="PIRSF038885">
    <property type="entry name" value="COB"/>
    <property type="match status" value="1"/>
</dbReference>
<dbReference type="SUPFAM" id="SSF81648">
    <property type="entry name" value="a domain/subunit of cytochrome bc1 complex (Ubiquinol-cytochrome c reductase)"/>
    <property type="match status" value="1"/>
</dbReference>
<dbReference type="SUPFAM" id="SSF81342">
    <property type="entry name" value="Transmembrane di-heme cytochromes"/>
    <property type="match status" value="1"/>
</dbReference>
<dbReference type="PROSITE" id="PS51003">
    <property type="entry name" value="CYTB_CTER"/>
    <property type="match status" value="1"/>
</dbReference>
<dbReference type="PROSITE" id="PS51002">
    <property type="entry name" value="CYTB_NTER"/>
    <property type="match status" value="1"/>
</dbReference>
<gene>
    <name type="primary">MT-CYB</name>
    <name type="synonym">COB</name>
    <name type="synonym">CYTB</name>
    <name type="synonym">MTCYB</name>
</gene>
<protein>
    <recommendedName>
        <fullName>Cytochrome b</fullName>
    </recommendedName>
    <alternativeName>
        <fullName>Complex III subunit 3</fullName>
    </alternativeName>
    <alternativeName>
        <fullName>Complex III subunit III</fullName>
    </alternativeName>
    <alternativeName>
        <fullName>Cytochrome b-c1 complex subunit 3</fullName>
    </alternativeName>
    <alternativeName>
        <fullName>Ubiquinol-cytochrome-c reductase complex cytochrome b subunit</fullName>
    </alternativeName>
</protein>